<evidence type="ECO:0000250" key="1"/>
<evidence type="ECO:0000250" key="2">
    <source>
        <dbReference type="UniProtKB" id="Q9UMR7"/>
    </source>
</evidence>
<evidence type="ECO:0000255" key="3"/>
<evidence type="ECO:0000255" key="4">
    <source>
        <dbReference type="PROSITE-ProRule" id="PRU00040"/>
    </source>
</evidence>
<evidence type="ECO:0000269" key="5">
    <source>
    </source>
</evidence>
<evidence type="ECO:0000305" key="6"/>
<organism>
    <name type="scientific">Mus musculus</name>
    <name type="common">Mouse</name>
    <dbReference type="NCBI Taxonomy" id="10090"/>
    <lineage>
        <taxon>Eukaryota</taxon>
        <taxon>Metazoa</taxon>
        <taxon>Chordata</taxon>
        <taxon>Craniata</taxon>
        <taxon>Vertebrata</taxon>
        <taxon>Euteleostomi</taxon>
        <taxon>Mammalia</taxon>
        <taxon>Eutheria</taxon>
        <taxon>Euarchontoglires</taxon>
        <taxon>Glires</taxon>
        <taxon>Rodentia</taxon>
        <taxon>Myomorpha</taxon>
        <taxon>Muroidea</taxon>
        <taxon>Muridae</taxon>
        <taxon>Murinae</taxon>
        <taxon>Mus</taxon>
        <taxon>Mus</taxon>
    </lineage>
</organism>
<name>CLC4A_MOUSE</name>
<reference key="1">
    <citation type="journal article" date="1999" name="J. Immunol.">
        <title>APCs express DCIR, a novel C-type lectin surface receptor containing an immunoreceptor tyrosine-based inhibitory motif.</title>
        <authorList>
            <person name="Bates E.E.M."/>
            <person name="Fournier N."/>
            <person name="Garcia E."/>
            <person name="Valladeau J."/>
            <person name="Durand I."/>
            <person name="Pin J.-J."/>
            <person name="Zurawski S.M."/>
            <person name="Patel S."/>
            <person name="Abrams J.S."/>
            <person name="Lebecque S."/>
            <person name="Garrone P."/>
            <person name="Saeland S."/>
        </authorList>
    </citation>
    <scope>NUCLEOTIDE SEQUENCE [MRNA]</scope>
    <source>
        <tissue>Lymph node</tissue>
    </source>
</reference>
<reference key="2">
    <citation type="journal article" date="2002" name="J. Invest. Dermatol.">
        <title>DCIR acts as an inhibitory receptor depending on its immunoreceptor tyrosine-based inhibitory motif.</title>
        <authorList>
            <person name="Kanazawa N."/>
            <person name="Okazaki T."/>
            <person name="Nishimura H."/>
            <person name="Tashiro K."/>
            <person name="Inaba K."/>
            <person name="Miyachi Y."/>
        </authorList>
    </citation>
    <scope>NUCLEOTIDE SEQUENCE [MRNA]</scope>
    <scope>FUNCTION</scope>
    <scope>TISSUE SPECIFICITY</scope>
    <scope>MUTAGENESIS OF TYR-7</scope>
    <scope>DOMAIN</scope>
    <source>
        <strain>BALB/cJ</strain>
    </source>
</reference>
<reference key="3">
    <citation type="journal article" date="2005" name="Science">
        <title>The transcriptional landscape of the mammalian genome.</title>
        <authorList>
            <person name="Carninci P."/>
            <person name="Kasukawa T."/>
            <person name="Katayama S."/>
            <person name="Gough J."/>
            <person name="Frith M.C."/>
            <person name="Maeda N."/>
            <person name="Oyama R."/>
            <person name="Ravasi T."/>
            <person name="Lenhard B."/>
            <person name="Wells C."/>
            <person name="Kodzius R."/>
            <person name="Shimokawa K."/>
            <person name="Bajic V.B."/>
            <person name="Brenner S.E."/>
            <person name="Batalov S."/>
            <person name="Forrest A.R."/>
            <person name="Zavolan M."/>
            <person name="Davis M.J."/>
            <person name="Wilming L.G."/>
            <person name="Aidinis V."/>
            <person name="Allen J.E."/>
            <person name="Ambesi-Impiombato A."/>
            <person name="Apweiler R."/>
            <person name="Aturaliya R.N."/>
            <person name="Bailey T.L."/>
            <person name="Bansal M."/>
            <person name="Baxter L."/>
            <person name="Beisel K.W."/>
            <person name="Bersano T."/>
            <person name="Bono H."/>
            <person name="Chalk A.M."/>
            <person name="Chiu K.P."/>
            <person name="Choudhary V."/>
            <person name="Christoffels A."/>
            <person name="Clutterbuck D.R."/>
            <person name="Crowe M.L."/>
            <person name="Dalla E."/>
            <person name="Dalrymple B.P."/>
            <person name="de Bono B."/>
            <person name="Della Gatta G."/>
            <person name="di Bernardo D."/>
            <person name="Down T."/>
            <person name="Engstrom P."/>
            <person name="Fagiolini M."/>
            <person name="Faulkner G."/>
            <person name="Fletcher C.F."/>
            <person name="Fukushima T."/>
            <person name="Furuno M."/>
            <person name="Futaki S."/>
            <person name="Gariboldi M."/>
            <person name="Georgii-Hemming P."/>
            <person name="Gingeras T.R."/>
            <person name="Gojobori T."/>
            <person name="Green R.E."/>
            <person name="Gustincich S."/>
            <person name="Harbers M."/>
            <person name="Hayashi Y."/>
            <person name="Hensch T.K."/>
            <person name="Hirokawa N."/>
            <person name="Hill D."/>
            <person name="Huminiecki L."/>
            <person name="Iacono M."/>
            <person name="Ikeo K."/>
            <person name="Iwama A."/>
            <person name="Ishikawa T."/>
            <person name="Jakt M."/>
            <person name="Kanapin A."/>
            <person name="Katoh M."/>
            <person name="Kawasawa Y."/>
            <person name="Kelso J."/>
            <person name="Kitamura H."/>
            <person name="Kitano H."/>
            <person name="Kollias G."/>
            <person name="Krishnan S.P."/>
            <person name="Kruger A."/>
            <person name="Kummerfeld S.K."/>
            <person name="Kurochkin I.V."/>
            <person name="Lareau L.F."/>
            <person name="Lazarevic D."/>
            <person name="Lipovich L."/>
            <person name="Liu J."/>
            <person name="Liuni S."/>
            <person name="McWilliam S."/>
            <person name="Madan Babu M."/>
            <person name="Madera M."/>
            <person name="Marchionni L."/>
            <person name="Matsuda H."/>
            <person name="Matsuzawa S."/>
            <person name="Miki H."/>
            <person name="Mignone F."/>
            <person name="Miyake S."/>
            <person name="Morris K."/>
            <person name="Mottagui-Tabar S."/>
            <person name="Mulder N."/>
            <person name="Nakano N."/>
            <person name="Nakauchi H."/>
            <person name="Ng P."/>
            <person name="Nilsson R."/>
            <person name="Nishiguchi S."/>
            <person name="Nishikawa S."/>
            <person name="Nori F."/>
            <person name="Ohara O."/>
            <person name="Okazaki Y."/>
            <person name="Orlando V."/>
            <person name="Pang K.C."/>
            <person name="Pavan W.J."/>
            <person name="Pavesi G."/>
            <person name="Pesole G."/>
            <person name="Petrovsky N."/>
            <person name="Piazza S."/>
            <person name="Reed J."/>
            <person name="Reid J.F."/>
            <person name="Ring B.Z."/>
            <person name="Ringwald M."/>
            <person name="Rost B."/>
            <person name="Ruan Y."/>
            <person name="Salzberg S.L."/>
            <person name="Sandelin A."/>
            <person name="Schneider C."/>
            <person name="Schoenbach C."/>
            <person name="Sekiguchi K."/>
            <person name="Semple C.A."/>
            <person name="Seno S."/>
            <person name="Sessa L."/>
            <person name="Sheng Y."/>
            <person name="Shibata Y."/>
            <person name="Shimada H."/>
            <person name="Shimada K."/>
            <person name="Silva D."/>
            <person name="Sinclair B."/>
            <person name="Sperling S."/>
            <person name="Stupka E."/>
            <person name="Sugiura K."/>
            <person name="Sultana R."/>
            <person name="Takenaka Y."/>
            <person name="Taki K."/>
            <person name="Tammoja K."/>
            <person name="Tan S.L."/>
            <person name="Tang S."/>
            <person name="Taylor M.S."/>
            <person name="Tegner J."/>
            <person name="Teichmann S.A."/>
            <person name="Ueda H.R."/>
            <person name="van Nimwegen E."/>
            <person name="Verardo R."/>
            <person name="Wei C.L."/>
            <person name="Yagi K."/>
            <person name="Yamanishi H."/>
            <person name="Zabarovsky E."/>
            <person name="Zhu S."/>
            <person name="Zimmer A."/>
            <person name="Hide W."/>
            <person name="Bult C."/>
            <person name="Grimmond S.M."/>
            <person name="Teasdale R.D."/>
            <person name="Liu E.T."/>
            <person name="Brusic V."/>
            <person name="Quackenbush J."/>
            <person name="Wahlestedt C."/>
            <person name="Mattick J.S."/>
            <person name="Hume D.A."/>
            <person name="Kai C."/>
            <person name="Sasaki D."/>
            <person name="Tomaru Y."/>
            <person name="Fukuda S."/>
            <person name="Kanamori-Katayama M."/>
            <person name="Suzuki M."/>
            <person name="Aoki J."/>
            <person name="Arakawa T."/>
            <person name="Iida J."/>
            <person name="Imamura K."/>
            <person name="Itoh M."/>
            <person name="Kato T."/>
            <person name="Kawaji H."/>
            <person name="Kawagashira N."/>
            <person name="Kawashima T."/>
            <person name="Kojima M."/>
            <person name="Kondo S."/>
            <person name="Konno H."/>
            <person name="Nakano K."/>
            <person name="Ninomiya N."/>
            <person name="Nishio T."/>
            <person name="Okada M."/>
            <person name="Plessy C."/>
            <person name="Shibata K."/>
            <person name="Shiraki T."/>
            <person name="Suzuki S."/>
            <person name="Tagami M."/>
            <person name="Waki K."/>
            <person name="Watahiki A."/>
            <person name="Okamura-Oho Y."/>
            <person name="Suzuki H."/>
            <person name="Kawai J."/>
            <person name="Hayashizaki Y."/>
        </authorList>
    </citation>
    <scope>NUCLEOTIDE SEQUENCE [LARGE SCALE MRNA]</scope>
    <source>
        <strain>C57BL/6J</strain>
        <tissue>Cerebellum</tissue>
    </source>
</reference>
<reference key="4">
    <citation type="journal article" date="2004" name="Genome Res.">
        <title>The status, quality, and expansion of the NIH full-length cDNA project: the Mammalian Gene Collection (MGC).</title>
        <authorList>
            <consortium name="The MGC Project Team"/>
        </authorList>
    </citation>
    <scope>NUCLEOTIDE SEQUENCE [LARGE SCALE MRNA]</scope>
    <source>
        <strain>C57BL/6J</strain>
        <tissue>Jaw</tissue>
        <tissue>Limb</tissue>
        <tissue>Mammary gland</tissue>
    </source>
</reference>
<reference key="5">
    <citation type="journal article" date="2009" name="Immunity">
        <title>The phagosomal proteome in interferon-gamma-activated macrophages.</title>
        <authorList>
            <person name="Trost M."/>
            <person name="English L."/>
            <person name="Lemieux S."/>
            <person name="Courcelles M."/>
            <person name="Desjardins M."/>
            <person name="Thibault P."/>
        </authorList>
    </citation>
    <scope>IDENTIFICATION BY MASS SPECTROMETRY [LARGE SCALE ANALYSIS]</scope>
</reference>
<keyword id="KW-1064">Adaptive immunity</keyword>
<keyword id="KW-0106">Calcium</keyword>
<keyword id="KW-1003">Cell membrane</keyword>
<keyword id="KW-1015">Disulfide bond</keyword>
<keyword id="KW-0325">Glycoprotein</keyword>
<keyword id="KW-0391">Immunity</keyword>
<keyword id="KW-0399">Innate immunity</keyword>
<keyword id="KW-0430">Lectin</keyword>
<keyword id="KW-0472">Membrane</keyword>
<keyword id="KW-0479">Metal-binding</keyword>
<keyword id="KW-1185">Reference proteome</keyword>
<keyword id="KW-0735">Signal-anchor</keyword>
<keyword id="KW-0812">Transmembrane</keyword>
<keyword id="KW-1133">Transmembrane helix</keyword>
<accession>Q9QZ15</accession>
<accession>Q4VA33</accession>
<comment type="function">
    <text evidence="1 5">May be involved in regulating immune reactivity. May play a role in modulating dendritic cells (DC) differentiation and/or maturation (By similarity). May be involved in the inhibition of B-cell-receptor-mediated calcium mobilization and protein tyrosine phosphorylation.</text>
</comment>
<comment type="function">
    <text evidence="2 5">C-type lectin receptor that binds carbohydrates mannose and fucose but also weakly interacts with N-acetylglucosamine (GlcNAc) in a Ca(2+)-dependent manner. Involved in regulating immune reactivity. Once triggered by antigen, it is internalized by clathrin-dependent endocytosis and delivers its antigenic cargo into the antigen presentation pathway resulting in cross-priming of CD8(+) T cells. This cross-presentation and cross-priming are enhanced by TLR7 and TLR8 agonists with increased expansion of the CD8(+) T cells, high production of IFNG and TNF with reduced levels of IL4, IL5 and IL13. In plasmacytoid dendritic cells, inhibits TLR9-mediated IFNA and TNF production (By similarity). May be involved via its ITIM motif (immunoreceptor tyrosine-based inhibitory motifs) in the inhibition of B-cell-receptor-mediated calcium mobilization and protein tyrosine phosphorylation (PubMed:11841542).</text>
</comment>
<comment type="subunit">
    <text evidence="2">May interact with PTPN6 via its ITIM site.</text>
</comment>
<comment type="subcellular location">
    <subcellularLocation>
        <location evidence="6">Cell membrane</location>
        <topology evidence="2">Single-pass type II membrane protein</topology>
        <orientation evidence="2">Extracellular side</orientation>
    </subcellularLocation>
</comment>
<comment type="tissue specificity">
    <text evidence="5">Expressed in splenic antigen-presenting cells including B-cells, monocytes/macrophages, and dendritic cells (at protein level). Expressed in spleen and lymph node and slightly increased with dendritic cell maturation.</text>
</comment>
<comment type="domain">
    <text evidence="5">Contains 1 copy of a cytoplasmic motif that is referred to as the immunoreceptor tyrosine-based inhibitor motif (ITIM). This motif is involved in modulation of cellular responses. The phosphorylated ITIM motif can bind the SH2 domain of several SH2-containing phosphatases.</text>
</comment>
<comment type="online information" name="Functional Glycomics Gateway - Glycan Binding">
    <link uri="http://www.functionalglycomics.org/glycomics/GBPServlet?&amp;operationType=view&amp;cbpId=cbp_mou_Ctlect_160"/>
    <text>DCIR1</text>
</comment>
<feature type="chain" id="PRO_0000046613" description="C-type lectin domain family 4 member A">
    <location>
        <begin position="1"/>
        <end position="238"/>
    </location>
</feature>
<feature type="topological domain" description="Cytoplasmic" evidence="3">
    <location>
        <begin position="1"/>
        <end position="48"/>
    </location>
</feature>
<feature type="transmembrane region" description="Helical; Signal-anchor for type II membrane protein" evidence="3">
    <location>
        <begin position="49"/>
        <end position="69"/>
    </location>
</feature>
<feature type="topological domain" description="Extracellular" evidence="3">
    <location>
        <begin position="70"/>
        <end position="238"/>
    </location>
</feature>
<feature type="domain" description="C-type lectin" evidence="4">
    <location>
        <begin position="126"/>
        <end position="233"/>
    </location>
</feature>
<feature type="short sequence motif" description="ITIM motif">
    <location>
        <begin position="5"/>
        <end position="10"/>
    </location>
</feature>
<feature type="binding site" evidence="2">
    <location>
        <position position="146"/>
    </location>
    <ligand>
        <name>Ca(2+)</name>
        <dbReference type="ChEBI" id="CHEBI:29108"/>
        <label>1</label>
    </ligand>
</feature>
<feature type="binding site" evidence="2">
    <location>
        <position position="152"/>
    </location>
    <ligand>
        <name>Ca(2+)</name>
        <dbReference type="ChEBI" id="CHEBI:29108"/>
        <label>1</label>
    </ligand>
</feature>
<feature type="binding site" evidence="2">
    <location>
        <begin position="197"/>
        <end position="199"/>
    </location>
    <ligand>
        <name>alpha-D-mannopyranose</name>
        <dbReference type="ChEBI" id="CHEBI:28729"/>
    </ligand>
</feature>
<feature type="binding site" evidence="2">
    <location>
        <position position="197"/>
    </location>
    <ligand>
        <name>Ca(2+)</name>
        <dbReference type="ChEBI" id="CHEBI:29108"/>
        <label>2</label>
    </ligand>
</feature>
<feature type="binding site" evidence="2">
    <location>
        <position position="199"/>
    </location>
    <ligand>
        <name>Ca(2+)</name>
        <dbReference type="ChEBI" id="CHEBI:29108"/>
        <label>2</label>
    </ligand>
</feature>
<feature type="binding site" evidence="2">
    <location>
        <position position="203"/>
    </location>
    <ligand>
        <name>alpha-D-mannopyranose</name>
        <dbReference type="ChEBI" id="CHEBI:28729"/>
    </ligand>
</feature>
<feature type="binding site" evidence="2">
    <location>
        <position position="203"/>
    </location>
    <ligand>
        <name>Ca(2+)</name>
        <dbReference type="ChEBI" id="CHEBI:29108"/>
        <label>2</label>
    </ligand>
</feature>
<feature type="binding site" evidence="2">
    <location>
        <begin position="209"/>
        <end position="211"/>
    </location>
    <ligand>
        <name>N-acetyl-D-glucosamine</name>
        <dbReference type="ChEBI" id="CHEBI:506227"/>
    </ligand>
</feature>
<feature type="binding site" evidence="2">
    <location>
        <position position="219"/>
    </location>
    <ligand>
        <name>Ca(2+)</name>
        <dbReference type="ChEBI" id="CHEBI:29108"/>
        <label>2</label>
    </ligand>
</feature>
<feature type="binding site" evidence="2">
    <location>
        <position position="220"/>
    </location>
    <ligand>
        <name>Ca(2+)</name>
        <dbReference type="ChEBI" id="CHEBI:29108"/>
        <label>2</label>
    </ligand>
</feature>
<feature type="glycosylation site" description="N-linked (GlcNAc...) asparagine" evidence="3">
    <location>
        <position position="91"/>
    </location>
</feature>
<feature type="glycosylation site" description="N-linked (GlcNAc...) asparagine" evidence="3">
    <location>
        <position position="131"/>
    </location>
</feature>
<feature type="glycosylation site" description="N-linked (GlcNAc...) asparagine" evidence="3">
    <location>
        <position position="136"/>
    </location>
</feature>
<feature type="disulfide bond" evidence="4">
    <location>
        <begin position="107"/>
        <end position="118"/>
    </location>
</feature>
<feature type="disulfide bond" evidence="4">
    <location>
        <begin position="137"/>
        <end position="231"/>
    </location>
</feature>
<feature type="disulfide bond" evidence="4">
    <location>
        <begin position="205"/>
        <end position="223"/>
    </location>
</feature>
<feature type="mutagenesis site" description="Loss of inhibition of B-cell calcium mobilization." evidence="5">
    <original>Y</original>
    <variation>F</variation>
    <location>
        <position position="7"/>
    </location>
</feature>
<gene>
    <name type="primary">Clec4a</name>
    <name type="synonym">Clec4a2</name>
    <name type="synonym">Clecsf6</name>
    <name type="synonym">Dcir</name>
</gene>
<proteinExistence type="evidence at protein level"/>
<protein>
    <recommendedName>
        <fullName>C-type lectin domain family 4 member A</fullName>
    </recommendedName>
    <alternativeName>
        <fullName>C-type lectin superfamily member 6</fullName>
    </alternativeName>
    <alternativeName>
        <fullName>Dendritic cell immunoreceptor</fullName>
    </alternativeName>
    <cdAntigenName>CD367</cdAntigenName>
</protein>
<sequence>MASEITYAEVKFKNESNSLHTYSESPAAPREKPIRDLRKPGSPSLLLTSLMLLLLLLAITFLVAFIIYFQKYSQLLEEKKAAKNIMHNELNCTKSVSPMEDKVWSCCPKDWRLFGSHCYLVPTVSSSASWNKSEENCSRMGAHLVVIQSQEEQDFITGILDTHAAYFIGLWDTGHRQWQWVDQTPYEESITFWHNGEPSSGNEKCATIIYRWKTGWGWNDISCSLKQKSVCQMKKINL</sequence>
<dbReference type="EMBL" id="AJ133533">
    <property type="protein sequence ID" value="CAB57870.1"/>
    <property type="molecule type" value="mRNA"/>
</dbReference>
<dbReference type="EMBL" id="AF387099">
    <property type="protein sequence ID" value="AAM22402.1"/>
    <property type="molecule type" value="mRNA"/>
</dbReference>
<dbReference type="EMBL" id="AK049002">
    <property type="protein sequence ID" value="BAC33509.1"/>
    <property type="molecule type" value="mRNA"/>
</dbReference>
<dbReference type="EMBL" id="BC075729">
    <property type="protein sequence ID" value="AAH75729.1"/>
    <property type="molecule type" value="mRNA"/>
</dbReference>
<dbReference type="EMBL" id="BC096565">
    <property type="protein sequence ID" value="AAH96565.1"/>
    <property type="molecule type" value="mRNA"/>
</dbReference>
<dbReference type="CCDS" id="CCDS20510.1"/>
<dbReference type="RefSeq" id="NP_001163803.1">
    <property type="nucleotide sequence ID" value="NM_001170332.1"/>
</dbReference>
<dbReference type="RefSeq" id="NP_001163804.1">
    <property type="nucleotide sequence ID" value="NM_001170333.1"/>
</dbReference>
<dbReference type="RefSeq" id="NP_036129.1">
    <property type="nucleotide sequence ID" value="NM_011999.4"/>
</dbReference>
<dbReference type="SMR" id="Q9QZ15"/>
<dbReference type="BioGRID" id="205041">
    <property type="interactions" value="1"/>
</dbReference>
<dbReference type="FunCoup" id="Q9QZ15">
    <property type="interactions" value="54"/>
</dbReference>
<dbReference type="STRING" id="10090.ENSMUSP00000032248"/>
<dbReference type="GlyConnect" id="2239">
    <property type="glycosylation" value="1 N-Linked glycan (1 site)"/>
</dbReference>
<dbReference type="GlyCosmos" id="Q9QZ15">
    <property type="glycosylation" value="3 sites, 1 glycan"/>
</dbReference>
<dbReference type="GlyGen" id="Q9QZ15">
    <property type="glycosylation" value="4 sites, 3 N-linked glycans (2 sites)"/>
</dbReference>
<dbReference type="iPTMnet" id="Q9QZ15"/>
<dbReference type="PhosphoSitePlus" id="Q9QZ15"/>
<dbReference type="PaxDb" id="10090-ENSMUSP00000032248"/>
<dbReference type="DNASU" id="26888"/>
<dbReference type="Ensembl" id="ENSMUST00000041779.13">
    <property type="protein sequence ID" value="ENSMUSP00000045781.7"/>
    <property type="gene ID" value="ENSMUSG00000030148.16"/>
</dbReference>
<dbReference type="Ensembl" id="ENSMUST00000161365.8">
    <property type="protein sequence ID" value="ENSMUSP00000124615.2"/>
    <property type="gene ID" value="ENSMUSG00000030148.16"/>
</dbReference>
<dbReference type="GeneID" id="26888"/>
<dbReference type="KEGG" id="mmu:26888"/>
<dbReference type="UCSC" id="uc009dqa.1">
    <property type="organism name" value="mouse"/>
</dbReference>
<dbReference type="AGR" id="MGI:1349412"/>
<dbReference type="CTD" id="26888"/>
<dbReference type="MGI" id="MGI:1349412">
    <property type="gene designation" value="Clec4a2"/>
</dbReference>
<dbReference type="VEuPathDB" id="HostDB:ENSMUSG00000030148"/>
<dbReference type="eggNOG" id="KOG4297">
    <property type="taxonomic scope" value="Eukaryota"/>
</dbReference>
<dbReference type="GeneTree" id="ENSGT00940000162867"/>
<dbReference type="HOGENOM" id="CLU_049894_7_5_1"/>
<dbReference type="InParanoid" id="Q9QZ15"/>
<dbReference type="OMA" id="MINSARG"/>
<dbReference type="OrthoDB" id="2142683at2759"/>
<dbReference type="PhylomeDB" id="Q9QZ15"/>
<dbReference type="BioGRID-ORCS" id="26888">
    <property type="hits" value="2 hits in 77 CRISPR screens"/>
</dbReference>
<dbReference type="ChiTaRS" id="Clec4a2">
    <property type="organism name" value="mouse"/>
</dbReference>
<dbReference type="PRO" id="PR:Q9QZ15"/>
<dbReference type="Proteomes" id="UP000000589">
    <property type="component" value="Chromosome 6"/>
</dbReference>
<dbReference type="RNAct" id="Q9QZ15">
    <property type="molecule type" value="protein"/>
</dbReference>
<dbReference type="Bgee" id="ENSMUSG00000030148">
    <property type="expression patterns" value="Expressed in granulocyte and 113 other cell types or tissues"/>
</dbReference>
<dbReference type="ExpressionAtlas" id="Q9QZ15">
    <property type="expression patterns" value="baseline and differential"/>
</dbReference>
<dbReference type="GO" id="GO:0016020">
    <property type="term" value="C:membrane"/>
    <property type="evidence" value="ECO:0000304"/>
    <property type="project" value="MGI"/>
</dbReference>
<dbReference type="GO" id="GO:0005886">
    <property type="term" value="C:plasma membrane"/>
    <property type="evidence" value="ECO:0007669"/>
    <property type="project" value="UniProtKB-SubCell"/>
</dbReference>
<dbReference type="GO" id="GO:0005509">
    <property type="term" value="F:calcium ion binding"/>
    <property type="evidence" value="ECO:0000250"/>
    <property type="project" value="UniProtKB"/>
</dbReference>
<dbReference type="GO" id="GO:0030246">
    <property type="term" value="F:carbohydrate binding"/>
    <property type="evidence" value="ECO:0000250"/>
    <property type="project" value="UniProtKB"/>
</dbReference>
<dbReference type="GO" id="GO:0005537">
    <property type="term" value="F:D-mannose binding"/>
    <property type="evidence" value="ECO:0000250"/>
    <property type="project" value="UniProtKB"/>
</dbReference>
<dbReference type="GO" id="GO:0002250">
    <property type="term" value="P:adaptive immune response"/>
    <property type="evidence" value="ECO:0007669"/>
    <property type="project" value="UniProtKB-KW"/>
</dbReference>
<dbReference type="GO" id="GO:0042590">
    <property type="term" value="P:antigen processing and presentation of exogenous peptide antigen via MHC class I"/>
    <property type="evidence" value="ECO:0000250"/>
    <property type="project" value="UniProtKB"/>
</dbReference>
<dbReference type="GO" id="GO:0036037">
    <property type="term" value="P:CD8-positive, alpha-beta T cell activation"/>
    <property type="evidence" value="ECO:0000250"/>
    <property type="project" value="UniProtKB"/>
</dbReference>
<dbReference type="GO" id="GO:0045087">
    <property type="term" value="P:innate immune response"/>
    <property type="evidence" value="ECO:0007669"/>
    <property type="project" value="UniProtKB-KW"/>
</dbReference>
<dbReference type="GO" id="GO:0001818">
    <property type="term" value="P:negative regulation of cytokine production"/>
    <property type="evidence" value="ECO:0000250"/>
    <property type="project" value="UniProtKB"/>
</dbReference>
<dbReference type="GO" id="GO:0032720">
    <property type="term" value="P:negative regulation of tumor necrosis factor production"/>
    <property type="evidence" value="ECO:0000250"/>
    <property type="project" value="UniProtKB"/>
</dbReference>
<dbReference type="GO" id="GO:0002470">
    <property type="term" value="P:plasmacytoid dendritic cell antigen processing and presentation"/>
    <property type="evidence" value="ECO:0000250"/>
    <property type="project" value="UniProtKB"/>
</dbReference>
<dbReference type="CDD" id="cd03590">
    <property type="entry name" value="CLECT_DC-SIGN_like"/>
    <property type="match status" value="1"/>
</dbReference>
<dbReference type="FunFam" id="3.10.100.10:FF:000024">
    <property type="entry name" value="C-type lectin domain family 4 member A"/>
    <property type="match status" value="1"/>
</dbReference>
<dbReference type="Gene3D" id="3.10.100.10">
    <property type="entry name" value="Mannose-Binding Protein A, subunit A"/>
    <property type="match status" value="1"/>
</dbReference>
<dbReference type="InterPro" id="IPR001304">
    <property type="entry name" value="C-type_lectin-like"/>
</dbReference>
<dbReference type="InterPro" id="IPR016186">
    <property type="entry name" value="C-type_lectin-like/link_sf"/>
</dbReference>
<dbReference type="InterPro" id="IPR018378">
    <property type="entry name" value="C-type_lectin_CS"/>
</dbReference>
<dbReference type="InterPro" id="IPR051379">
    <property type="entry name" value="C-type_Lectin_Receptor_IMM"/>
</dbReference>
<dbReference type="InterPro" id="IPR033989">
    <property type="entry name" value="CD209-like_CTLD"/>
</dbReference>
<dbReference type="InterPro" id="IPR016187">
    <property type="entry name" value="CTDL_fold"/>
</dbReference>
<dbReference type="PANTHER" id="PTHR46746:SF3">
    <property type="entry name" value="C-TYPE LECTIN DOMAIN-CONTAINING PROTEIN-RELATED"/>
    <property type="match status" value="1"/>
</dbReference>
<dbReference type="PANTHER" id="PTHR46746">
    <property type="entry name" value="KILLER CELL LECTIN-LIKE RECEPTOR SUBFAMILY F MEMBER 2"/>
    <property type="match status" value="1"/>
</dbReference>
<dbReference type="Pfam" id="PF00059">
    <property type="entry name" value="Lectin_C"/>
    <property type="match status" value="1"/>
</dbReference>
<dbReference type="SMART" id="SM00034">
    <property type="entry name" value="CLECT"/>
    <property type="match status" value="1"/>
</dbReference>
<dbReference type="SUPFAM" id="SSF56436">
    <property type="entry name" value="C-type lectin-like"/>
    <property type="match status" value="1"/>
</dbReference>
<dbReference type="PROSITE" id="PS00615">
    <property type="entry name" value="C_TYPE_LECTIN_1"/>
    <property type="match status" value="1"/>
</dbReference>
<dbReference type="PROSITE" id="PS50041">
    <property type="entry name" value="C_TYPE_LECTIN_2"/>
    <property type="match status" value="1"/>
</dbReference>